<evidence type="ECO:0000250" key="1">
    <source>
        <dbReference type="UniProtKB" id="P25355"/>
    </source>
</evidence>
<evidence type="ECO:0000250" key="2">
    <source>
        <dbReference type="UniProtKB" id="Q9UBB4"/>
    </source>
</evidence>
<evidence type="ECO:0000305" key="3"/>
<dbReference type="EMBL" id="CR382138">
    <property type="protein sequence ID" value="CAR66370.1"/>
    <property type="molecule type" value="Genomic_DNA"/>
</dbReference>
<dbReference type="RefSeq" id="XP_002770849.1">
    <property type="nucleotide sequence ID" value="XM_002770803.1"/>
</dbReference>
<dbReference type="FunCoup" id="Q6BKV2">
    <property type="interactions" value="23"/>
</dbReference>
<dbReference type="GeneID" id="8999010"/>
<dbReference type="KEGG" id="dha:DEHA2F18964g"/>
<dbReference type="VEuPathDB" id="FungiDB:DEHA2F18964g"/>
<dbReference type="eggNOG" id="KOG2676">
    <property type="taxonomic scope" value="Eukaryota"/>
</dbReference>
<dbReference type="HOGENOM" id="CLU_043683_0_0_1"/>
<dbReference type="InParanoid" id="Q6BKV2"/>
<dbReference type="OMA" id="HFLFRQF"/>
<dbReference type="OrthoDB" id="379794at2759"/>
<dbReference type="Proteomes" id="UP000000599">
    <property type="component" value="Chromosome F"/>
</dbReference>
<dbReference type="GO" id="GO:0005829">
    <property type="term" value="C:cytosol"/>
    <property type="evidence" value="ECO:0007669"/>
    <property type="project" value="TreeGrafter"/>
</dbReference>
<dbReference type="GO" id="GO:0051301">
    <property type="term" value="P:cell division"/>
    <property type="evidence" value="ECO:0007669"/>
    <property type="project" value="UniProtKB-KW"/>
</dbReference>
<dbReference type="Gene3D" id="1.25.10.10">
    <property type="entry name" value="Leucine-rich Repeat Variant"/>
    <property type="match status" value="1"/>
</dbReference>
<dbReference type="InterPro" id="IPR011989">
    <property type="entry name" value="ARM-like"/>
</dbReference>
<dbReference type="InterPro" id="IPR016024">
    <property type="entry name" value="ARM-type_fold"/>
</dbReference>
<dbReference type="InterPro" id="IPR051374">
    <property type="entry name" value="Ataxin-10/CTR86_families"/>
</dbReference>
<dbReference type="InterPro" id="IPR019156">
    <property type="entry name" value="Ataxin-10_domain"/>
</dbReference>
<dbReference type="PANTHER" id="PTHR13255">
    <property type="entry name" value="ATAXIN-10"/>
    <property type="match status" value="1"/>
</dbReference>
<dbReference type="PANTHER" id="PTHR13255:SF0">
    <property type="entry name" value="ATAXIN-10"/>
    <property type="match status" value="1"/>
</dbReference>
<dbReference type="Pfam" id="PF09759">
    <property type="entry name" value="Atx10homo_assoc"/>
    <property type="match status" value="1"/>
</dbReference>
<dbReference type="SUPFAM" id="SSF48371">
    <property type="entry name" value="ARM repeat"/>
    <property type="match status" value="1"/>
</dbReference>
<gene>
    <name type="primary">CTR86</name>
    <name type="ordered locus">DEHA2F18964g</name>
</gene>
<sequence length="489" mass="56525">MMEEELYKSVIVTAKSVRSVLLEETSNVEDCQKNLNALGQIVSASSQSQEYRSQILANNGLPDVLVEILNRSFQDNVPTEELKFTLYIRLMRGILLLARNLVITKQFVEFSSILSSLENFNQKVSHNNEFYSKTLVVYIQFLANMSQITREQNIVAEIVETFFKNEDLMSLIANDDQMKMPFAAFLKNILSNSDNLYDVLTHDDTILRYTISELDKADIHNEDLDQYSSLLILTFQNIIAHETYSKWLKRIDCESAEFSRIMKLNQVIVTSKEDWDNYQLTAMLAWIFDNFLVFSEISKSILLSSIYDPLELKRVHLNLIILLDCLSDLGKFEATKQFLEHYNAIEELISLLRVVHESVDRKTLKNKEKIEETVGKKEFPQVKSLIIEVIAFLVHGSFEIQEKMRELHGLELVLSNCMIDDNDPFIKERAIVCVKFLLANNEKNQQFVADLEAKQTVDDDALKEVGYEVQIEDGNVKLRKTENQKLQEI</sequence>
<accession>Q6BKV2</accession>
<accession>B5RUJ2</accession>
<feature type="chain" id="PRO_0000280688" description="Ataxin-10 homolog">
    <location>
        <begin position="1"/>
        <end position="489"/>
    </location>
</feature>
<protein>
    <recommendedName>
        <fullName evidence="3">Ataxin-10 homolog</fullName>
    </recommendedName>
    <alternativeName>
        <fullName>Copper transport protein 86</fullName>
    </alternativeName>
</protein>
<proteinExistence type="inferred from homology"/>
<comment type="function">
    <text evidence="2">May play a role in the regulation of cytokinesis.</text>
</comment>
<comment type="subcellular location">
    <subcellularLocation>
        <location evidence="1">Cytoplasm</location>
    </subcellularLocation>
</comment>
<comment type="similarity">
    <text evidence="3">Belongs to the ataxin-10 family.</text>
</comment>
<reference key="1">
    <citation type="journal article" date="2004" name="Nature">
        <title>Genome evolution in yeasts.</title>
        <authorList>
            <person name="Dujon B."/>
            <person name="Sherman D."/>
            <person name="Fischer G."/>
            <person name="Durrens P."/>
            <person name="Casaregola S."/>
            <person name="Lafontaine I."/>
            <person name="de Montigny J."/>
            <person name="Marck C."/>
            <person name="Neuveglise C."/>
            <person name="Talla E."/>
            <person name="Goffard N."/>
            <person name="Frangeul L."/>
            <person name="Aigle M."/>
            <person name="Anthouard V."/>
            <person name="Babour A."/>
            <person name="Barbe V."/>
            <person name="Barnay S."/>
            <person name="Blanchin S."/>
            <person name="Beckerich J.-M."/>
            <person name="Beyne E."/>
            <person name="Bleykasten C."/>
            <person name="Boisrame A."/>
            <person name="Boyer J."/>
            <person name="Cattolico L."/>
            <person name="Confanioleri F."/>
            <person name="de Daruvar A."/>
            <person name="Despons L."/>
            <person name="Fabre E."/>
            <person name="Fairhead C."/>
            <person name="Ferry-Dumazet H."/>
            <person name="Groppi A."/>
            <person name="Hantraye F."/>
            <person name="Hennequin C."/>
            <person name="Jauniaux N."/>
            <person name="Joyet P."/>
            <person name="Kachouri R."/>
            <person name="Kerrest A."/>
            <person name="Koszul R."/>
            <person name="Lemaire M."/>
            <person name="Lesur I."/>
            <person name="Ma L."/>
            <person name="Muller H."/>
            <person name="Nicaud J.-M."/>
            <person name="Nikolski M."/>
            <person name="Oztas S."/>
            <person name="Ozier-Kalogeropoulos O."/>
            <person name="Pellenz S."/>
            <person name="Potier S."/>
            <person name="Richard G.-F."/>
            <person name="Straub M.-L."/>
            <person name="Suleau A."/>
            <person name="Swennen D."/>
            <person name="Tekaia F."/>
            <person name="Wesolowski-Louvel M."/>
            <person name="Westhof E."/>
            <person name="Wirth B."/>
            <person name="Zeniou-Meyer M."/>
            <person name="Zivanovic Y."/>
            <person name="Bolotin-Fukuhara M."/>
            <person name="Thierry A."/>
            <person name="Bouchier C."/>
            <person name="Caudron B."/>
            <person name="Scarpelli C."/>
            <person name="Gaillardin C."/>
            <person name="Weissenbach J."/>
            <person name="Wincker P."/>
            <person name="Souciet J.-L."/>
        </authorList>
    </citation>
    <scope>NUCLEOTIDE SEQUENCE [LARGE SCALE GENOMIC DNA]</scope>
    <source>
        <strain>ATCC 36239 / CBS 767 / BCRC 21394 / JCM 1990 / NBRC 0083 / IGC 2968</strain>
    </source>
</reference>
<keyword id="KW-0131">Cell cycle</keyword>
<keyword id="KW-0132">Cell division</keyword>
<keyword id="KW-0963">Cytoplasm</keyword>
<keyword id="KW-1185">Reference proteome</keyword>
<name>ATX10_DEBHA</name>
<organism>
    <name type="scientific">Debaryomyces hansenii (strain ATCC 36239 / CBS 767 / BCRC 21394 / JCM 1990 / NBRC 0083 / IGC 2968)</name>
    <name type="common">Yeast</name>
    <name type="synonym">Torulaspora hansenii</name>
    <dbReference type="NCBI Taxonomy" id="284592"/>
    <lineage>
        <taxon>Eukaryota</taxon>
        <taxon>Fungi</taxon>
        <taxon>Dikarya</taxon>
        <taxon>Ascomycota</taxon>
        <taxon>Saccharomycotina</taxon>
        <taxon>Pichiomycetes</taxon>
        <taxon>Debaryomycetaceae</taxon>
        <taxon>Debaryomyces</taxon>
    </lineage>
</organism>